<feature type="chain" id="PRO_1000061696" description="PqqA binding protein">
    <location>
        <begin position="1"/>
        <end position="92"/>
    </location>
</feature>
<comment type="function">
    <text evidence="1">Functions as a PqqA binding protein and presents PqqA to PqqE, in the pyrroloquinoline quinone (PQQ) biosynthetic pathway.</text>
</comment>
<comment type="pathway">
    <text evidence="1">Cofactor biosynthesis; pyrroloquinoline quinone biosynthesis.</text>
</comment>
<comment type="subunit">
    <text evidence="1">Monomer. Interacts with PqqE.</text>
</comment>
<comment type="similarity">
    <text evidence="1">Belongs to the PqqD family.</text>
</comment>
<sequence>MSSITRDSQPALRAGVRLQHDRTRDQWVLLAPERVVELDEIALVVAQRYDGTRSLAQIAQELAAEFDADAADIEADVIELTATLQQKRLLRL</sequence>
<proteinExistence type="inferred from homology"/>
<reference key="1">
    <citation type="journal article" date="2005" name="Nucleic Acids Res.">
        <title>The genome sequence of Xanthomonas oryzae pathovar oryzae KACC10331, the bacterial blight pathogen of rice.</title>
        <authorList>
            <person name="Lee B.-M."/>
            <person name="Park Y.-J."/>
            <person name="Park D.-S."/>
            <person name="Kang H.-W."/>
            <person name="Kim J.-G."/>
            <person name="Song E.-S."/>
            <person name="Park I.-C."/>
            <person name="Yoon U.-H."/>
            <person name="Hahn J.-H."/>
            <person name="Koo B.-S."/>
            <person name="Lee G.-B."/>
            <person name="Kim H."/>
            <person name="Park H.-S."/>
            <person name="Yoon K.-O."/>
            <person name="Kim J.-H."/>
            <person name="Jung C.-H."/>
            <person name="Koh N.-H."/>
            <person name="Seo J.-S."/>
            <person name="Go S.-J."/>
        </authorList>
    </citation>
    <scope>NUCLEOTIDE SEQUENCE [LARGE SCALE GENOMIC DNA]</scope>
    <source>
        <strain>KACC10331 / KXO85</strain>
    </source>
</reference>
<name>PQQD_XANOR</name>
<dbReference type="EMBL" id="AE013598">
    <property type="protein sequence ID" value="ABJ89924.1"/>
    <property type="molecule type" value="Genomic_DNA"/>
</dbReference>
<dbReference type="SMR" id="Q05I08"/>
<dbReference type="STRING" id="291331.XOO4781"/>
<dbReference type="KEGG" id="xoo:XOO4781"/>
<dbReference type="HOGENOM" id="CLU_163864_0_0_6"/>
<dbReference type="UniPathway" id="UPA00539"/>
<dbReference type="Proteomes" id="UP000006735">
    <property type="component" value="Chromosome"/>
</dbReference>
<dbReference type="GO" id="GO:0048038">
    <property type="term" value="F:quinone binding"/>
    <property type="evidence" value="ECO:0007669"/>
    <property type="project" value="InterPro"/>
</dbReference>
<dbReference type="GO" id="GO:0018189">
    <property type="term" value="P:pyrroloquinoline quinone biosynthetic process"/>
    <property type="evidence" value="ECO:0007669"/>
    <property type="project" value="UniProtKB-UniRule"/>
</dbReference>
<dbReference type="Gene3D" id="1.10.10.1150">
    <property type="entry name" value="Coenzyme PQQ synthesis protein D (PqqD)"/>
    <property type="match status" value="1"/>
</dbReference>
<dbReference type="HAMAP" id="MF_00655">
    <property type="entry name" value="PQQ_syn_PqqD"/>
    <property type="match status" value="1"/>
</dbReference>
<dbReference type="InterPro" id="IPR008792">
    <property type="entry name" value="PQQD"/>
</dbReference>
<dbReference type="InterPro" id="IPR022479">
    <property type="entry name" value="PqqD_bac"/>
</dbReference>
<dbReference type="InterPro" id="IPR041881">
    <property type="entry name" value="PqqD_sf"/>
</dbReference>
<dbReference type="NCBIfam" id="TIGR03859">
    <property type="entry name" value="PQQ_PqqD"/>
    <property type="match status" value="1"/>
</dbReference>
<dbReference type="Pfam" id="PF05402">
    <property type="entry name" value="PqqD"/>
    <property type="match status" value="1"/>
</dbReference>
<evidence type="ECO:0000255" key="1">
    <source>
        <dbReference type="HAMAP-Rule" id="MF_00655"/>
    </source>
</evidence>
<gene>
    <name evidence="1" type="primary">pqqD</name>
    <name type="ordered locus">XOO4781</name>
</gene>
<organism>
    <name type="scientific">Xanthomonas oryzae pv. oryzae (strain KACC10331 / KXO85)</name>
    <dbReference type="NCBI Taxonomy" id="291331"/>
    <lineage>
        <taxon>Bacteria</taxon>
        <taxon>Pseudomonadati</taxon>
        <taxon>Pseudomonadota</taxon>
        <taxon>Gammaproteobacteria</taxon>
        <taxon>Lysobacterales</taxon>
        <taxon>Lysobacteraceae</taxon>
        <taxon>Xanthomonas</taxon>
    </lineage>
</organism>
<keyword id="KW-0884">PQQ biosynthesis</keyword>
<keyword id="KW-1185">Reference proteome</keyword>
<protein>
    <recommendedName>
        <fullName evidence="1">PqqA binding protein</fullName>
    </recommendedName>
    <alternativeName>
        <fullName evidence="1">Coenzyme PQQ synthesis protein D</fullName>
    </alternativeName>
    <alternativeName>
        <fullName evidence="1">Pyrroloquinoline quinone biosynthesis protein D</fullName>
    </alternativeName>
</protein>
<accession>Q05I08</accession>